<protein>
    <recommendedName>
        <fullName evidence="1">Probable endonuclease 4</fullName>
        <ecNumber evidence="1">3.1.21.2</ecNumber>
    </recommendedName>
    <alternativeName>
        <fullName evidence="1">Endodeoxyribonuclease IV</fullName>
    </alternativeName>
    <alternativeName>
        <fullName evidence="1">Endonuclease IV</fullName>
    </alternativeName>
</protein>
<sequence>MMELYIGSHLSTAGGWNALLERSHEEGGTAFAFFPRSPYGKRSKALDPAGAAAFGARLKAEGYGPLVVHAPYVYNLAGKDEAKRAFAIEALAEDIELLTAIRAAGQEVYINIHPGAHVGQGAETGCRLISEGLNQVFERADGVMVLLETMAGKGTECGRNFDELATIMDGVENKANVGVTFDTCHVLDAGYDLENDYDGVMRQLDEAIGLARVKAIHVNDSQFGLGSHKDRHANIGEGQLGIPFFTRLVNDPTMAKLPMILETKEQTPTTHRDEIALLRGLVD</sequence>
<organism>
    <name type="scientific">Bifidobacterium longum (strain NCC 2705)</name>
    <dbReference type="NCBI Taxonomy" id="206672"/>
    <lineage>
        <taxon>Bacteria</taxon>
        <taxon>Bacillati</taxon>
        <taxon>Actinomycetota</taxon>
        <taxon>Actinomycetes</taxon>
        <taxon>Bifidobacteriales</taxon>
        <taxon>Bifidobacteriaceae</taxon>
        <taxon>Bifidobacterium</taxon>
    </lineage>
</organism>
<comment type="function">
    <text evidence="1">Endonuclease IV plays a role in DNA repair. It cleaves phosphodiester bonds at apurinic or apyrimidinic (AP) sites, generating a 3'-hydroxyl group and a 5'-terminal sugar phosphate.</text>
</comment>
<comment type="catalytic activity">
    <reaction evidence="1">
        <text>Endonucleolytic cleavage to 5'-phosphooligonucleotide end-products.</text>
        <dbReference type="EC" id="3.1.21.2"/>
    </reaction>
</comment>
<comment type="cofactor">
    <cofactor evidence="1">
        <name>Zn(2+)</name>
        <dbReference type="ChEBI" id="CHEBI:29105"/>
    </cofactor>
    <text evidence="1">Binds 3 Zn(2+) ions.</text>
</comment>
<comment type="similarity">
    <text evidence="1">Belongs to the AP endonuclease 2 family.</text>
</comment>
<gene>
    <name evidence="1" type="primary">nfo</name>
    <name type="ordered locus">BL0757</name>
</gene>
<dbReference type="EC" id="3.1.21.2" evidence="1"/>
<dbReference type="EMBL" id="AE014295">
    <property type="protein sequence ID" value="AAN24574.1"/>
    <property type="molecule type" value="Genomic_DNA"/>
</dbReference>
<dbReference type="RefSeq" id="NP_695938.1">
    <property type="nucleotide sequence ID" value="NC_004307.2"/>
</dbReference>
<dbReference type="RefSeq" id="WP_011068117.1">
    <property type="nucleotide sequence ID" value="NC_004307.2"/>
</dbReference>
<dbReference type="SMR" id="Q8G689"/>
<dbReference type="STRING" id="206672.BL0757"/>
<dbReference type="EnsemblBacteria" id="AAN24574">
    <property type="protein sequence ID" value="AAN24574"/>
    <property type="gene ID" value="BL0757"/>
</dbReference>
<dbReference type="KEGG" id="blo:BL0757"/>
<dbReference type="PATRIC" id="fig|206672.9.peg.457"/>
<dbReference type="HOGENOM" id="CLU_025885_4_1_11"/>
<dbReference type="OrthoDB" id="9805666at2"/>
<dbReference type="PhylomeDB" id="Q8G689"/>
<dbReference type="Proteomes" id="UP000000439">
    <property type="component" value="Chromosome"/>
</dbReference>
<dbReference type="GO" id="GO:0008833">
    <property type="term" value="F:deoxyribonuclease IV (phage-T4-induced) activity"/>
    <property type="evidence" value="ECO:0007669"/>
    <property type="project" value="UniProtKB-UniRule"/>
</dbReference>
<dbReference type="GO" id="GO:0003677">
    <property type="term" value="F:DNA binding"/>
    <property type="evidence" value="ECO:0007669"/>
    <property type="project" value="InterPro"/>
</dbReference>
<dbReference type="GO" id="GO:0003906">
    <property type="term" value="F:DNA-(apurinic or apyrimidinic site) endonuclease activity"/>
    <property type="evidence" value="ECO:0007669"/>
    <property type="project" value="TreeGrafter"/>
</dbReference>
<dbReference type="GO" id="GO:0008081">
    <property type="term" value="F:phosphoric diester hydrolase activity"/>
    <property type="evidence" value="ECO:0007669"/>
    <property type="project" value="TreeGrafter"/>
</dbReference>
<dbReference type="GO" id="GO:0008270">
    <property type="term" value="F:zinc ion binding"/>
    <property type="evidence" value="ECO:0007669"/>
    <property type="project" value="UniProtKB-UniRule"/>
</dbReference>
<dbReference type="GO" id="GO:0006284">
    <property type="term" value="P:base-excision repair"/>
    <property type="evidence" value="ECO:0007669"/>
    <property type="project" value="TreeGrafter"/>
</dbReference>
<dbReference type="CDD" id="cd00019">
    <property type="entry name" value="AP2Ec"/>
    <property type="match status" value="1"/>
</dbReference>
<dbReference type="FunFam" id="3.20.20.150:FF:000001">
    <property type="entry name" value="Probable endonuclease 4"/>
    <property type="match status" value="1"/>
</dbReference>
<dbReference type="Gene3D" id="3.20.20.150">
    <property type="entry name" value="Divalent-metal-dependent TIM barrel enzymes"/>
    <property type="match status" value="1"/>
</dbReference>
<dbReference type="HAMAP" id="MF_00152">
    <property type="entry name" value="Nfo"/>
    <property type="match status" value="1"/>
</dbReference>
<dbReference type="InterPro" id="IPR001719">
    <property type="entry name" value="AP_endonuc_2"/>
</dbReference>
<dbReference type="InterPro" id="IPR018246">
    <property type="entry name" value="AP_endonuc_F2_Zn_BS"/>
</dbReference>
<dbReference type="InterPro" id="IPR036237">
    <property type="entry name" value="Xyl_isomerase-like_sf"/>
</dbReference>
<dbReference type="InterPro" id="IPR013022">
    <property type="entry name" value="Xyl_isomerase-like_TIM-brl"/>
</dbReference>
<dbReference type="NCBIfam" id="TIGR00587">
    <property type="entry name" value="nfo"/>
    <property type="match status" value="1"/>
</dbReference>
<dbReference type="PANTHER" id="PTHR21445:SF0">
    <property type="entry name" value="APURINIC-APYRIMIDINIC ENDONUCLEASE"/>
    <property type="match status" value="1"/>
</dbReference>
<dbReference type="PANTHER" id="PTHR21445">
    <property type="entry name" value="ENDONUCLEASE IV ENDODEOXYRIBONUCLEASE IV"/>
    <property type="match status" value="1"/>
</dbReference>
<dbReference type="Pfam" id="PF01261">
    <property type="entry name" value="AP_endonuc_2"/>
    <property type="match status" value="1"/>
</dbReference>
<dbReference type="SMART" id="SM00518">
    <property type="entry name" value="AP2Ec"/>
    <property type="match status" value="1"/>
</dbReference>
<dbReference type="SUPFAM" id="SSF51658">
    <property type="entry name" value="Xylose isomerase-like"/>
    <property type="match status" value="1"/>
</dbReference>
<dbReference type="PROSITE" id="PS00730">
    <property type="entry name" value="AP_NUCLEASE_F2_2"/>
    <property type="match status" value="1"/>
</dbReference>
<dbReference type="PROSITE" id="PS00731">
    <property type="entry name" value="AP_NUCLEASE_F2_3"/>
    <property type="match status" value="1"/>
</dbReference>
<dbReference type="PROSITE" id="PS51432">
    <property type="entry name" value="AP_NUCLEASE_F2_4"/>
    <property type="match status" value="1"/>
</dbReference>
<evidence type="ECO:0000255" key="1">
    <source>
        <dbReference type="HAMAP-Rule" id="MF_00152"/>
    </source>
</evidence>
<reference key="1">
    <citation type="journal article" date="2002" name="Proc. Natl. Acad. Sci. U.S.A.">
        <title>The genome sequence of Bifidobacterium longum reflects its adaptation to the human gastrointestinal tract.</title>
        <authorList>
            <person name="Schell M.A."/>
            <person name="Karmirantzou M."/>
            <person name="Snel B."/>
            <person name="Vilanova D."/>
            <person name="Berger B."/>
            <person name="Pessi G."/>
            <person name="Zwahlen M.-C."/>
            <person name="Desiere F."/>
            <person name="Bork P."/>
            <person name="Delley M."/>
            <person name="Pridmore R.D."/>
            <person name="Arigoni F."/>
        </authorList>
    </citation>
    <scope>NUCLEOTIDE SEQUENCE [LARGE SCALE GENOMIC DNA]</scope>
    <source>
        <strain>NCC 2705</strain>
    </source>
</reference>
<proteinExistence type="inferred from homology"/>
<accession>Q8G689</accession>
<name>END4_BIFLO</name>
<feature type="chain" id="PRO_0000190827" description="Probable endonuclease 4">
    <location>
        <begin position="1"/>
        <end position="283"/>
    </location>
</feature>
<feature type="binding site" evidence="1">
    <location>
        <position position="69"/>
    </location>
    <ligand>
        <name>Zn(2+)</name>
        <dbReference type="ChEBI" id="CHEBI:29105"/>
        <label>1</label>
    </ligand>
</feature>
<feature type="binding site" evidence="1">
    <location>
        <position position="113"/>
    </location>
    <ligand>
        <name>Zn(2+)</name>
        <dbReference type="ChEBI" id="CHEBI:29105"/>
        <label>1</label>
    </ligand>
</feature>
<feature type="binding site" evidence="1">
    <location>
        <position position="148"/>
    </location>
    <ligand>
        <name>Zn(2+)</name>
        <dbReference type="ChEBI" id="CHEBI:29105"/>
        <label>1</label>
    </ligand>
</feature>
<feature type="binding site" evidence="1">
    <location>
        <position position="148"/>
    </location>
    <ligand>
        <name>Zn(2+)</name>
        <dbReference type="ChEBI" id="CHEBI:29105"/>
        <label>2</label>
    </ligand>
</feature>
<feature type="binding site" evidence="1">
    <location>
        <position position="182"/>
    </location>
    <ligand>
        <name>Zn(2+)</name>
        <dbReference type="ChEBI" id="CHEBI:29105"/>
        <label>2</label>
    </ligand>
</feature>
<feature type="binding site" evidence="1">
    <location>
        <position position="185"/>
    </location>
    <ligand>
        <name>Zn(2+)</name>
        <dbReference type="ChEBI" id="CHEBI:29105"/>
        <label>3</label>
    </ligand>
</feature>
<feature type="binding site" evidence="1">
    <location>
        <position position="217"/>
    </location>
    <ligand>
        <name>Zn(2+)</name>
        <dbReference type="ChEBI" id="CHEBI:29105"/>
        <label>2</label>
    </ligand>
</feature>
<feature type="binding site" evidence="1">
    <location>
        <position position="230"/>
    </location>
    <ligand>
        <name>Zn(2+)</name>
        <dbReference type="ChEBI" id="CHEBI:29105"/>
        <label>3</label>
    </ligand>
</feature>
<feature type="binding site" evidence="1">
    <location>
        <position position="232"/>
    </location>
    <ligand>
        <name>Zn(2+)</name>
        <dbReference type="ChEBI" id="CHEBI:29105"/>
        <label>3</label>
    </ligand>
</feature>
<feature type="binding site" evidence="1">
    <location>
        <position position="262"/>
    </location>
    <ligand>
        <name>Zn(2+)</name>
        <dbReference type="ChEBI" id="CHEBI:29105"/>
        <label>2</label>
    </ligand>
</feature>
<keyword id="KW-0227">DNA damage</keyword>
<keyword id="KW-0234">DNA repair</keyword>
<keyword id="KW-0255">Endonuclease</keyword>
<keyword id="KW-0378">Hydrolase</keyword>
<keyword id="KW-0479">Metal-binding</keyword>
<keyword id="KW-0540">Nuclease</keyword>
<keyword id="KW-1185">Reference proteome</keyword>
<keyword id="KW-0862">Zinc</keyword>